<name>MTBC_RICCO</name>
<sequence length="527" mass="57738">MAAAAAPAVAVNGGVKVASQAYLESKAVKETRVLISDLCRQFYNLGWVSGTGGSITIKVHDDSIPKPNQLILMSPSGVQKERMEPEDMYVLAANGSILSSPSPKPYPHKPPKCSDCGPLFLKAYEMCNAGAVIHSHGMESCLVTMINPLSKEFKITHMEMIKGIKGHGYYDELVVPIIENTAYENELTDSLAKAIEEYPKTTAVLVRNHGIYIWGDSWISAKTQAECYHYLFDAAIKLHQLGLDWSTPNHGLIQNVKALIGSNRDINTSVKAGLKDSNHGMQSLPGCIVLDIEGTTTPITFVADVLFPYARDNVGRHLYATYETAETQDDIKLLRTQVEDDLARGVNEAVSIPPDDAGKEEVIAALVANVEAMIKADRKITALKQLQGHIWRTGFQNNELEGVVYDDVPEALEKWHALGIKVYIYSSGSRLAQRLIFGKTNYGDLRKYLSGFFDTTVGNKRETRSYIEISESVGVDRPSEILFVTDVVQEAVAAKGAGLEAVISIRQGNAPLPENHGFKTINSLSEI</sequence>
<protein>
    <recommendedName>
        <fullName evidence="1">Probable bifunctional methylthioribulose-1-phosphate dehydratase/enolase-phosphatase E1</fullName>
    </recommendedName>
    <domain>
        <recommendedName>
            <fullName evidence="1">Methylthioribulose-1-phosphate dehydratase</fullName>
            <shortName evidence="1">MTRu-1-P dehydratase</shortName>
            <ecNumber evidence="1">4.2.1.109</ecNumber>
        </recommendedName>
    </domain>
    <domain>
        <recommendedName>
            <fullName evidence="1">Enolase-phosphatase E1</fullName>
            <ecNumber evidence="1">3.1.3.77</ecNumber>
        </recommendedName>
        <alternativeName>
            <fullName evidence="1">2,3-diketo-5-methylthio-1-phosphopentane phosphatase</fullName>
        </alternativeName>
    </domain>
</protein>
<accession>B9SQI7</accession>
<evidence type="ECO:0000255" key="1">
    <source>
        <dbReference type="HAMAP-Rule" id="MF_03118"/>
    </source>
</evidence>
<feature type="chain" id="PRO_0000394161" description="Probable bifunctional methylthioribulose-1-phosphate dehydratase/enolase-phosphatase E1">
    <location>
        <begin position="1"/>
        <end position="527"/>
    </location>
</feature>
<feature type="region of interest" description="Methylthioribulose-1-phosphate dehydratase" evidence="1">
    <location>
        <begin position="1"/>
        <end position="244"/>
    </location>
</feature>
<feature type="region of interest" description="Enolase-phosphatase E1" evidence="1">
    <location>
        <begin position="288"/>
        <end position="527"/>
    </location>
</feature>
<feature type="active site" description="Proton donor/acceptor; for methylthioribulose-1-phosphate dehydratase activity" evidence="1">
    <location>
        <position position="159"/>
    </location>
</feature>
<feature type="binding site" evidence="1">
    <location>
        <position position="116"/>
    </location>
    <ligand>
        <name>substrate</name>
        <label>1</label>
        <note>for methylthioribulose-1-phosphate dehydratase activity</note>
    </ligand>
</feature>
<feature type="binding site" evidence="1">
    <location>
        <position position="134"/>
    </location>
    <ligand>
        <name>Zn(2+)</name>
        <dbReference type="ChEBI" id="CHEBI:29105"/>
    </ligand>
</feature>
<feature type="binding site" evidence="1">
    <location>
        <position position="136"/>
    </location>
    <ligand>
        <name>Zn(2+)</name>
        <dbReference type="ChEBI" id="CHEBI:29105"/>
    </ligand>
</feature>
<feature type="binding site" evidence="1">
    <location>
        <position position="209"/>
    </location>
    <ligand>
        <name>Zn(2+)</name>
        <dbReference type="ChEBI" id="CHEBI:29105"/>
    </ligand>
</feature>
<feature type="binding site" evidence="1">
    <location>
        <position position="291"/>
    </location>
    <ligand>
        <name>Mg(2+)</name>
        <dbReference type="ChEBI" id="CHEBI:18420"/>
    </ligand>
</feature>
<feature type="binding site" evidence="1">
    <location>
        <position position="293"/>
    </location>
    <ligand>
        <name>Mg(2+)</name>
        <dbReference type="ChEBI" id="CHEBI:18420"/>
    </ligand>
</feature>
<feature type="binding site" evidence="1">
    <location>
        <begin position="426"/>
        <end position="427"/>
    </location>
    <ligand>
        <name>substrate</name>
        <label>2</label>
        <note>for enolase-phosphatase activity</note>
    </ligand>
</feature>
<feature type="binding site" evidence="1">
    <location>
        <position position="460"/>
    </location>
    <ligand>
        <name>substrate</name>
        <label>2</label>
        <note>for enolase-phosphatase activity</note>
    </ligand>
</feature>
<feature type="binding site" evidence="1">
    <location>
        <position position="486"/>
    </location>
    <ligand>
        <name>Mg(2+)</name>
        <dbReference type="ChEBI" id="CHEBI:18420"/>
    </ligand>
</feature>
<dbReference type="EC" id="4.2.1.109" evidence="1"/>
<dbReference type="EC" id="3.1.3.77" evidence="1"/>
<dbReference type="EMBL" id="EQ974085">
    <property type="protein sequence ID" value="EEF34141.1"/>
    <property type="molecule type" value="Genomic_DNA"/>
</dbReference>
<dbReference type="RefSeq" id="XP_002528256.1">
    <property type="nucleotide sequence ID" value="XM_002528210.2"/>
</dbReference>
<dbReference type="SMR" id="B9SQI7"/>
<dbReference type="FunCoup" id="B9SQI7">
    <property type="interactions" value="1274"/>
</dbReference>
<dbReference type="STRING" id="3988.B9SQI7"/>
<dbReference type="KEGG" id="rcu:8265316"/>
<dbReference type="eggNOG" id="KOG2630">
    <property type="taxonomic scope" value="Eukaryota"/>
</dbReference>
<dbReference type="eggNOG" id="KOG2631">
    <property type="taxonomic scope" value="Eukaryota"/>
</dbReference>
<dbReference type="InParanoid" id="B9SQI7"/>
<dbReference type="OrthoDB" id="191080at2759"/>
<dbReference type="UniPathway" id="UPA00904">
    <property type="reaction ID" value="UER00875"/>
</dbReference>
<dbReference type="UniPathway" id="UPA00904">
    <property type="reaction ID" value="UER00876"/>
</dbReference>
<dbReference type="UniPathway" id="UPA00904">
    <property type="reaction ID" value="UER00877"/>
</dbReference>
<dbReference type="Proteomes" id="UP000008311">
    <property type="component" value="Unassembled WGS sequence"/>
</dbReference>
<dbReference type="GO" id="GO:0005737">
    <property type="term" value="C:cytoplasm"/>
    <property type="evidence" value="ECO:0000318"/>
    <property type="project" value="GO_Central"/>
</dbReference>
<dbReference type="GO" id="GO:0043874">
    <property type="term" value="F:acireductone synthase activity"/>
    <property type="evidence" value="ECO:0007669"/>
    <property type="project" value="UniProtKB-EC"/>
</dbReference>
<dbReference type="GO" id="GO:0000287">
    <property type="term" value="F:magnesium ion binding"/>
    <property type="evidence" value="ECO:0007669"/>
    <property type="project" value="UniProtKB-UniRule"/>
</dbReference>
<dbReference type="GO" id="GO:0046570">
    <property type="term" value="F:methylthioribulose 1-phosphate dehydratase activity"/>
    <property type="evidence" value="ECO:0000318"/>
    <property type="project" value="GO_Central"/>
</dbReference>
<dbReference type="GO" id="GO:0008270">
    <property type="term" value="F:zinc ion binding"/>
    <property type="evidence" value="ECO:0007669"/>
    <property type="project" value="UniProtKB-UniRule"/>
</dbReference>
<dbReference type="GO" id="GO:0019509">
    <property type="term" value="P:L-methionine salvage from methylthioadenosine"/>
    <property type="evidence" value="ECO:0000318"/>
    <property type="project" value="GO_Central"/>
</dbReference>
<dbReference type="CDD" id="cd01629">
    <property type="entry name" value="HAD_EP"/>
    <property type="match status" value="1"/>
</dbReference>
<dbReference type="FunFam" id="1.10.720.60:FF:000001">
    <property type="entry name" value="Probable bifunctional methylthioribulose-1-phosphate dehydratase/enolase-phosphatase E1"/>
    <property type="match status" value="1"/>
</dbReference>
<dbReference type="FunFam" id="3.40.225.10:FF:000010">
    <property type="entry name" value="Probable bifunctional methylthioribulose-1-phosphate dehydratase/enolase-phosphatase E1"/>
    <property type="match status" value="1"/>
</dbReference>
<dbReference type="FunFam" id="3.40.50.1000:FF:000088">
    <property type="entry name" value="Probable bifunctional methylthioribulose-1-phosphate dehydratase/enolase-phosphatase E1"/>
    <property type="match status" value="1"/>
</dbReference>
<dbReference type="Gene3D" id="1.10.720.60">
    <property type="match status" value="1"/>
</dbReference>
<dbReference type="Gene3D" id="3.40.225.10">
    <property type="entry name" value="Class II aldolase/adducin N-terminal domain"/>
    <property type="match status" value="1"/>
</dbReference>
<dbReference type="Gene3D" id="3.40.50.1000">
    <property type="entry name" value="HAD superfamily/HAD-like"/>
    <property type="match status" value="1"/>
</dbReference>
<dbReference type="HAMAP" id="MF_03116">
    <property type="entry name" value="Salvage_MtnB_euk"/>
    <property type="match status" value="1"/>
</dbReference>
<dbReference type="HAMAP" id="MF_03118">
    <property type="entry name" value="Salvage_MtnBC"/>
    <property type="match status" value="1"/>
</dbReference>
<dbReference type="InterPro" id="IPR001303">
    <property type="entry name" value="Aldolase_II/adducin_N"/>
</dbReference>
<dbReference type="InterPro" id="IPR036409">
    <property type="entry name" value="Aldolase_II/adducin_N_sf"/>
</dbReference>
<dbReference type="InterPro" id="IPR023943">
    <property type="entry name" value="Enolase-ppase_E1"/>
</dbReference>
<dbReference type="InterPro" id="IPR036412">
    <property type="entry name" value="HAD-like_sf"/>
</dbReference>
<dbReference type="InterPro" id="IPR006439">
    <property type="entry name" value="HAD-SF_hydro_IA"/>
</dbReference>
<dbReference type="InterPro" id="IPR023214">
    <property type="entry name" value="HAD_sf"/>
</dbReference>
<dbReference type="InterPro" id="IPR017714">
    <property type="entry name" value="MethylthioRu-1-P_deHdtase_MtnB"/>
</dbReference>
<dbReference type="InterPro" id="IPR027505">
    <property type="entry name" value="MtnB_viridiplantae"/>
</dbReference>
<dbReference type="InterPro" id="IPR027514">
    <property type="entry name" value="Salvage_MtnB_euk"/>
</dbReference>
<dbReference type="NCBIfam" id="TIGR01691">
    <property type="entry name" value="enolase-ppase"/>
    <property type="match status" value="1"/>
</dbReference>
<dbReference type="NCBIfam" id="TIGR01549">
    <property type="entry name" value="HAD-SF-IA-v1"/>
    <property type="match status" value="1"/>
</dbReference>
<dbReference type="NCBIfam" id="TIGR03328">
    <property type="entry name" value="salvage_mtnB"/>
    <property type="match status" value="1"/>
</dbReference>
<dbReference type="PANTHER" id="PTHR20371">
    <property type="entry name" value="ENOLASE-PHOSPHATASE E1"/>
    <property type="match status" value="1"/>
</dbReference>
<dbReference type="PANTHER" id="PTHR20371:SF1">
    <property type="entry name" value="ENOLASE-PHOSPHATASE E1"/>
    <property type="match status" value="1"/>
</dbReference>
<dbReference type="Pfam" id="PF00596">
    <property type="entry name" value="Aldolase_II"/>
    <property type="match status" value="1"/>
</dbReference>
<dbReference type="Pfam" id="PF00702">
    <property type="entry name" value="Hydrolase"/>
    <property type="match status" value="1"/>
</dbReference>
<dbReference type="SFLD" id="SFLDG01133">
    <property type="entry name" value="C1.5.4:_Enolase-phosphatase_Li"/>
    <property type="match status" value="1"/>
</dbReference>
<dbReference type="SFLD" id="SFLDF00044">
    <property type="entry name" value="enolase-phosphatase"/>
    <property type="match status" value="1"/>
</dbReference>
<dbReference type="SMART" id="SM01007">
    <property type="entry name" value="Aldolase_II"/>
    <property type="match status" value="1"/>
</dbReference>
<dbReference type="SUPFAM" id="SSF53639">
    <property type="entry name" value="AraD/HMP-PK domain-like"/>
    <property type="match status" value="1"/>
</dbReference>
<dbReference type="SUPFAM" id="SSF56784">
    <property type="entry name" value="HAD-like"/>
    <property type="match status" value="1"/>
</dbReference>
<gene>
    <name type="ORF">RCOM_0591060</name>
</gene>
<keyword id="KW-0028">Amino-acid biosynthesis</keyword>
<keyword id="KW-0378">Hydrolase</keyword>
<keyword id="KW-0456">Lyase</keyword>
<keyword id="KW-0460">Magnesium</keyword>
<keyword id="KW-0479">Metal-binding</keyword>
<keyword id="KW-0486">Methionine biosynthesis</keyword>
<keyword id="KW-0511">Multifunctional enzyme</keyword>
<keyword id="KW-1185">Reference proteome</keyword>
<keyword id="KW-0862">Zinc</keyword>
<comment type="catalytic activity">
    <reaction evidence="1">
        <text>5-(methylsulfanyl)-D-ribulose 1-phosphate = 5-methylsulfanyl-2,3-dioxopentyl phosphate + H2O</text>
        <dbReference type="Rhea" id="RHEA:15549"/>
        <dbReference type="ChEBI" id="CHEBI:15377"/>
        <dbReference type="ChEBI" id="CHEBI:58548"/>
        <dbReference type="ChEBI" id="CHEBI:58828"/>
        <dbReference type="EC" id="4.2.1.109"/>
    </reaction>
</comment>
<comment type="catalytic activity">
    <reaction evidence="1">
        <text>5-methylsulfanyl-2,3-dioxopentyl phosphate + H2O = 1,2-dihydroxy-5-(methylsulfanyl)pent-1-en-3-one + phosphate</text>
        <dbReference type="Rhea" id="RHEA:21700"/>
        <dbReference type="ChEBI" id="CHEBI:15377"/>
        <dbReference type="ChEBI" id="CHEBI:43474"/>
        <dbReference type="ChEBI" id="CHEBI:49252"/>
        <dbReference type="ChEBI" id="CHEBI:58828"/>
        <dbReference type="EC" id="3.1.3.77"/>
    </reaction>
</comment>
<comment type="cofactor">
    <cofactor evidence="1">
        <name>Zn(2+)</name>
        <dbReference type="ChEBI" id="CHEBI:29105"/>
    </cofactor>
    <text evidence="1">Binds 1 zinc ion per subunit.</text>
</comment>
<comment type="cofactor">
    <cofactor evidence="1">
        <name>Mg(2+)</name>
        <dbReference type="ChEBI" id="CHEBI:18420"/>
    </cofactor>
    <text evidence="1">Binds 1 Mg(2+) ion per subunit.</text>
</comment>
<comment type="pathway">
    <text evidence="1">Amino-acid biosynthesis; L-methionine biosynthesis via salvage pathway; L-methionine from S-methyl-5-thio-alpha-D-ribose 1-phosphate: step 2/6.</text>
</comment>
<comment type="pathway">
    <text evidence="1">Amino-acid biosynthesis; L-methionine biosynthesis via salvage pathway; L-methionine from S-methyl-5-thio-alpha-D-ribose 1-phosphate: step 3/6.</text>
</comment>
<comment type="pathway">
    <text evidence="1">Amino-acid biosynthesis; L-methionine biosynthesis via salvage pathway; L-methionine from S-methyl-5-thio-alpha-D-ribose 1-phosphate: step 4/6.</text>
</comment>
<comment type="similarity">
    <text evidence="1">In the N-terminal section; belongs to the aldolase class II family. MtnB subfamily.</text>
</comment>
<comment type="similarity">
    <text evidence="1">In the C-terminal section; belongs to the HAD-like hydrolase superfamily. MasA/MtnC family.</text>
</comment>
<organism>
    <name type="scientific">Ricinus communis</name>
    <name type="common">Castor bean</name>
    <dbReference type="NCBI Taxonomy" id="3988"/>
    <lineage>
        <taxon>Eukaryota</taxon>
        <taxon>Viridiplantae</taxon>
        <taxon>Streptophyta</taxon>
        <taxon>Embryophyta</taxon>
        <taxon>Tracheophyta</taxon>
        <taxon>Spermatophyta</taxon>
        <taxon>Magnoliopsida</taxon>
        <taxon>eudicotyledons</taxon>
        <taxon>Gunneridae</taxon>
        <taxon>Pentapetalae</taxon>
        <taxon>rosids</taxon>
        <taxon>fabids</taxon>
        <taxon>Malpighiales</taxon>
        <taxon>Euphorbiaceae</taxon>
        <taxon>Acalyphoideae</taxon>
        <taxon>Acalypheae</taxon>
        <taxon>Ricinus</taxon>
    </lineage>
</organism>
<proteinExistence type="inferred from homology"/>
<reference key="1">
    <citation type="journal article" date="2010" name="Nat. Biotechnol.">
        <title>Draft genome sequence of the oilseed species Ricinus communis.</title>
        <authorList>
            <person name="Chan A.P."/>
            <person name="Crabtree J."/>
            <person name="Zhao Q."/>
            <person name="Lorenzi H."/>
            <person name="Orvis J."/>
            <person name="Puiu D."/>
            <person name="Melake-Berhan A."/>
            <person name="Jones K.M."/>
            <person name="Redman J."/>
            <person name="Chen G."/>
            <person name="Cahoon E.B."/>
            <person name="Gedil M."/>
            <person name="Stanke M."/>
            <person name="Haas B.J."/>
            <person name="Wortman J.R."/>
            <person name="Fraser-Liggett C.M."/>
            <person name="Ravel J."/>
            <person name="Rabinowicz P.D."/>
        </authorList>
    </citation>
    <scope>NUCLEOTIDE SEQUENCE [LARGE SCALE GENOMIC DNA]</scope>
    <source>
        <strain>cv. Hale</strain>
    </source>
</reference>